<gene>
    <name evidence="1" type="primary">pnp</name>
    <name type="ordered locus">HP_1213</name>
</gene>
<feature type="chain" id="PRO_0000329678" description="Polyribonucleotide nucleotidyltransferase">
    <location>
        <begin position="1"/>
        <end position="688"/>
    </location>
</feature>
<feature type="domain" description="KH" evidence="1">
    <location>
        <begin position="550"/>
        <end position="609"/>
    </location>
</feature>
<feature type="domain" description="S1 motif" evidence="1">
    <location>
        <begin position="626"/>
        <end position="688"/>
    </location>
</feature>
<feature type="binding site" evidence="1">
    <location>
        <position position="484"/>
    </location>
    <ligand>
        <name>Mg(2+)</name>
        <dbReference type="ChEBI" id="CHEBI:18420"/>
    </ligand>
</feature>
<feature type="binding site" evidence="1">
    <location>
        <position position="490"/>
    </location>
    <ligand>
        <name>Mg(2+)</name>
        <dbReference type="ChEBI" id="CHEBI:18420"/>
    </ligand>
</feature>
<proteinExistence type="inferred from homology"/>
<reference key="1">
    <citation type="journal article" date="1997" name="Nature">
        <title>The complete genome sequence of the gastric pathogen Helicobacter pylori.</title>
        <authorList>
            <person name="Tomb J.-F."/>
            <person name="White O."/>
            <person name="Kerlavage A.R."/>
            <person name="Clayton R.A."/>
            <person name="Sutton G.G."/>
            <person name="Fleischmann R.D."/>
            <person name="Ketchum K.A."/>
            <person name="Klenk H.-P."/>
            <person name="Gill S.R."/>
            <person name="Dougherty B.A."/>
            <person name="Nelson K.E."/>
            <person name="Quackenbush J."/>
            <person name="Zhou L."/>
            <person name="Kirkness E.F."/>
            <person name="Peterson S.N."/>
            <person name="Loftus B.J."/>
            <person name="Richardson D.L."/>
            <person name="Dodson R.J."/>
            <person name="Khalak H.G."/>
            <person name="Glodek A."/>
            <person name="McKenney K."/>
            <person name="FitzGerald L.M."/>
            <person name="Lee N."/>
            <person name="Adams M.D."/>
            <person name="Hickey E.K."/>
            <person name="Berg D.E."/>
            <person name="Gocayne J.D."/>
            <person name="Utterback T.R."/>
            <person name="Peterson J.D."/>
            <person name="Kelley J.M."/>
            <person name="Cotton M.D."/>
            <person name="Weidman J.F."/>
            <person name="Fujii C."/>
            <person name="Bowman C."/>
            <person name="Watthey L."/>
            <person name="Wallin E."/>
            <person name="Hayes W.S."/>
            <person name="Borodovsky M."/>
            <person name="Karp P.D."/>
            <person name="Smith H.O."/>
            <person name="Fraser C.M."/>
            <person name="Venter J.C."/>
        </authorList>
    </citation>
    <scope>NUCLEOTIDE SEQUENCE [LARGE SCALE GENOMIC DNA]</scope>
    <source>
        <strain>ATCC 700392 / 26695</strain>
    </source>
</reference>
<organism>
    <name type="scientific">Helicobacter pylori (strain ATCC 700392 / 26695)</name>
    <name type="common">Campylobacter pylori</name>
    <dbReference type="NCBI Taxonomy" id="85962"/>
    <lineage>
        <taxon>Bacteria</taxon>
        <taxon>Pseudomonadati</taxon>
        <taxon>Campylobacterota</taxon>
        <taxon>Epsilonproteobacteria</taxon>
        <taxon>Campylobacterales</taxon>
        <taxon>Helicobacteraceae</taxon>
        <taxon>Helicobacter</taxon>
    </lineage>
</organism>
<sequence length="688" mass="76895">MDFITINSSNKTEEFALKQVAKQATSSLLYRLGKTIILASVCVEREPVSEDFLPLVVQFLEKSYAAGKIPGGFVKREGRAQDFEILTSRLIDRTLRPLFPKDYRYPTQITLMVLSHDIENDLQVSALNAASAALFLAHIAPIKSVSACRIARMDNEFIINPSASLLNQSSLDLFVSGTKESLNMIEMRSLGQKLNALEEPLMLEALELAQKSLEETCTLYEEIFTPHQNELFFKESQGIVFNERLLDLLKNQYFDEIIKGIESSALSERENVFNEIARKISEAHSEFSLEEIELSLEKVKKTEIRRMIIKDKIRPDKRALEEVRPILIESDLLPMAHSSILFTRGQTQSLVVGVLGTDNDAQTHESLEHKAPIKERFMFHYNFPPFCVGEASSIGAASRRELGHGNLAKRALETSIKNKEQVIRLVSEILESNGSSSMASVCAGSLALYASGVEIYDLVAGVAMGMVSEGQDHAILSDISGLEDAEGDMDFKIAGNLEGITAMQMDTKMSGIKLEILYQALLQAKEARKHILKIMHEAKEKIVINFSHLPTTEIFNVAPDKIVEIIGQGGRVIKEIVEKFEVKIDLNKPSGEVKIMGNKERVLKTKEFILNYLHSLDQELEQYAIDEVLEAQVKRIVDFGAFLSLPKGGEGLLRKQNMDKCQVVLKEGDSIRCRVISFNKGKIALDLA</sequence>
<accession>O25812</accession>
<name>PNP_HELPY</name>
<dbReference type="EC" id="2.7.7.8" evidence="1"/>
<dbReference type="EMBL" id="AE000511">
    <property type="protein sequence ID" value="AAD08258.1"/>
    <property type="molecule type" value="Genomic_DNA"/>
</dbReference>
<dbReference type="PIR" id="E64671">
    <property type="entry name" value="E64671"/>
</dbReference>
<dbReference type="RefSeq" id="NP_208005.1">
    <property type="nucleotide sequence ID" value="NC_000915.1"/>
</dbReference>
<dbReference type="RefSeq" id="WP_000345816.1">
    <property type="nucleotide sequence ID" value="NC_018939.1"/>
</dbReference>
<dbReference type="SMR" id="O25812"/>
<dbReference type="DIP" id="DIP-3551N"/>
<dbReference type="FunCoup" id="O25812">
    <property type="interactions" value="379"/>
</dbReference>
<dbReference type="IntAct" id="O25812">
    <property type="interactions" value="3"/>
</dbReference>
<dbReference type="MINT" id="O25812"/>
<dbReference type="STRING" id="85962.HP_1213"/>
<dbReference type="PaxDb" id="85962-C694_06275"/>
<dbReference type="EnsemblBacteria" id="AAD08258">
    <property type="protein sequence ID" value="AAD08258"/>
    <property type="gene ID" value="HP_1213"/>
</dbReference>
<dbReference type="KEGG" id="heo:C694_06275"/>
<dbReference type="KEGG" id="hpy:HP_1213"/>
<dbReference type="PATRIC" id="fig|85962.47.peg.1303"/>
<dbReference type="eggNOG" id="COG1185">
    <property type="taxonomic scope" value="Bacteria"/>
</dbReference>
<dbReference type="InParanoid" id="O25812"/>
<dbReference type="OrthoDB" id="9804305at2"/>
<dbReference type="PhylomeDB" id="O25812"/>
<dbReference type="Proteomes" id="UP000000429">
    <property type="component" value="Chromosome"/>
</dbReference>
<dbReference type="GO" id="GO:0005829">
    <property type="term" value="C:cytosol"/>
    <property type="evidence" value="ECO:0000318"/>
    <property type="project" value="GO_Central"/>
</dbReference>
<dbReference type="GO" id="GO:0000175">
    <property type="term" value="F:3'-5'-RNA exonuclease activity"/>
    <property type="evidence" value="ECO:0000318"/>
    <property type="project" value="GO_Central"/>
</dbReference>
<dbReference type="GO" id="GO:0000287">
    <property type="term" value="F:magnesium ion binding"/>
    <property type="evidence" value="ECO:0007669"/>
    <property type="project" value="UniProtKB-UniRule"/>
</dbReference>
<dbReference type="GO" id="GO:0004654">
    <property type="term" value="F:polyribonucleotide nucleotidyltransferase activity"/>
    <property type="evidence" value="ECO:0000318"/>
    <property type="project" value="GO_Central"/>
</dbReference>
<dbReference type="GO" id="GO:0003723">
    <property type="term" value="F:RNA binding"/>
    <property type="evidence" value="ECO:0007669"/>
    <property type="project" value="UniProtKB-UniRule"/>
</dbReference>
<dbReference type="GO" id="GO:0006402">
    <property type="term" value="P:mRNA catabolic process"/>
    <property type="evidence" value="ECO:0007669"/>
    <property type="project" value="UniProtKB-UniRule"/>
</dbReference>
<dbReference type="GO" id="GO:0006401">
    <property type="term" value="P:RNA catabolic process"/>
    <property type="evidence" value="ECO:0000318"/>
    <property type="project" value="GO_Central"/>
</dbReference>
<dbReference type="GO" id="GO:0006396">
    <property type="term" value="P:RNA processing"/>
    <property type="evidence" value="ECO:0007669"/>
    <property type="project" value="InterPro"/>
</dbReference>
<dbReference type="CDD" id="cd02393">
    <property type="entry name" value="KH-I_PNPase"/>
    <property type="match status" value="1"/>
</dbReference>
<dbReference type="CDD" id="cd11364">
    <property type="entry name" value="RNase_PH_PNPase_2"/>
    <property type="match status" value="1"/>
</dbReference>
<dbReference type="FunFam" id="3.30.1370.10:FF:000001">
    <property type="entry name" value="Polyribonucleotide nucleotidyltransferase"/>
    <property type="match status" value="1"/>
</dbReference>
<dbReference type="FunFam" id="3.30.230.70:FF:000026">
    <property type="entry name" value="Polyribonucleotide nucleotidyltransferase"/>
    <property type="match status" value="1"/>
</dbReference>
<dbReference type="FunFam" id="3.30.230.70:FF:000029">
    <property type="entry name" value="Polyribonucleotide nucleotidyltransferase"/>
    <property type="match status" value="1"/>
</dbReference>
<dbReference type="Gene3D" id="3.30.230.70">
    <property type="entry name" value="GHMP Kinase, N-terminal domain"/>
    <property type="match status" value="2"/>
</dbReference>
<dbReference type="Gene3D" id="3.30.1370.10">
    <property type="entry name" value="K Homology domain, type 1"/>
    <property type="match status" value="1"/>
</dbReference>
<dbReference type="Gene3D" id="2.40.50.140">
    <property type="entry name" value="Nucleic acid-binding proteins"/>
    <property type="match status" value="1"/>
</dbReference>
<dbReference type="HAMAP" id="MF_01595">
    <property type="entry name" value="PNPase"/>
    <property type="match status" value="1"/>
</dbReference>
<dbReference type="InterPro" id="IPR001247">
    <property type="entry name" value="ExoRNase_PH_dom1"/>
</dbReference>
<dbReference type="InterPro" id="IPR015847">
    <property type="entry name" value="ExoRNase_PH_dom2"/>
</dbReference>
<dbReference type="InterPro" id="IPR036345">
    <property type="entry name" value="ExoRNase_PH_dom2_sf"/>
</dbReference>
<dbReference type="InterPro" id="IPR004087">
    <property type="entry name" value="KH_dom"/>
</dbReference>
<dbReference type="InterPro" id="IPR004088">
    <property type="entry name" value="KH_dom_type_1"/>
</dbReference>
<dbReference type="InterPro" id="IPR036612">
    <property type="entry name" value="KH_dom_type_1_sf"/>
</dbReference>
<dbReference type="InterPro" id="IPR012340">
    <property type="entry name" value="NA-bd_OB-fold"/>
</dbReference>
<dbReference type="InterPro" id="IPR012162">
    <property type="entry name" value="PNPase"/>
</dbReference>
<dbReference type="InterPro" id="IPR027408">
    <property type="entry name" value="PNPase/RNase_PH_dom_sf"/>
</dbReference>
<dbReference type="InterPro" id="IPR036456">
    <property type="entry name" value="PNPase_PH_RNA-bd_sf"/>
</dbReference>
<dbReference type="InterPro" id="IPR020568">
    <property type="entry name" value="Ribosomal_Su5_D2-typ_SF"/>
</dbReference>
<dbReference type="InterPro" id="IPR003029">
    <property type="entry name" value="S1_domain"/>
</dbReference>
<dbReference type="NCBIfam" id="TIGR03591">
    <property type="entry name" value="polynuc_phos"/>
    <property type="match status" value="1"/>
</dbReference>
<dbReference type="NCBIfam" id="NF008805">
    <property type="entry name" value="PRK11824.1"/>
    <property type="match status" value="1"/>
</dbReference>
<dbReference type="PANTHER" id="PTHR11252">
    <property type="entry name" value="POLYRIBONUCLEOTIDE NUCLEOTIDYLTRANSFERASE"/>
    <property type="match status" value="1"/>
</dbReference>
<dbReference type="PANTHER" id="PTHR11252:SF0">
    <property type="entry name" value="POLYRIBONUCLEOTIDE NUCLEOTIDYLTRANSFERASE 1, MITOCHONDRIAL"/>
    <property type="match status" value="1"/>
</dbReference>
<dbReference type="Pfam" id="PF00013">
    <property type="entry name" value="KH_1"/>
    <property type="match status" value="1"/>
</dbReference>
<dbReference type="Pfam" id="PF01138">
    <property type="entry name" value="RNase_PH"/>
    <property type="match status" value="2"/>
</dbReference>
<dbReference type="Pfam" id="PF03725">
    <property type="entry name" value="RNase_PH_C"/>
    <property type="match status" value="2"/>
</dbReference>
<dbReference type="Pfam" id="PF00575">
    <property type="entry name" value="S1"/>
    <property type="match status" value="1"/>
</dbReference>
<dbReference type="PIRSF" id="PIRSF005499">
    <property type="entry name" value="PNPase"/>
    <property type="match status" value="1"/>
</dbReference>
<dbReference type="SMART" id="SM00322">
    <property type="entry name" value="KH"/>
    <property type="match status" value="1"/>
</dbReference>
<dbReference type="SMART" id="SM00316">
    <property type="entry name" value="S1"/>
    <property type="match status" value="1"/>
</dbReference>
<dbReference type="SUPFAM" id="SSF54791">
    <property type="entry name" value="Eukaryotic type KH-domain (KH-domain type I)"/>
    <property type="match status" value="1"/>
</dbReference>
<dbReference type="SUPFAM" id="SSF50249">
    <property type="entry name" value="Nucleic acid-binding proteins"/>
    <property type="match status" value="1"/>
</dbReference>
<dbReference type="SUPFAM" id="SSF46915">
    <property type="entry name" value="Polynucleotide phosphorylase/guanosine pentaphosphate synthase (PNPase/GPSI), domain 3"/>
    <property type="match status" value="1"/>
</dbReference>
<dbReference type="SUPFAM" id="SSF55666">
    <property type="entry name" value="Ribonuclease PH domain 2-like"/>
    <property type="match status" value="2"/>
</dbReference>
<dbReference type="SUPFAM" id="SSF54211">
    <property type="entry name" value="Ribosomal protein S5 domain 2-like"/>
    <property type="match status" value="2"/>
</dbReference>
<dbReference type="PROSITE" id="PS50084">
    <property type="entry name" value="KH_TYPE_1"/>
    <property type="match status" value="1"/>
</dbReference>
<dbReference type="PROSITE" id="PS50126">
    <property type="entry name" value="S1"/>
    <property type="match status" value="1"/>
</dbReference>
<keyword id="KW-0963">Cytoplasm</keyword>
<keyword id="KW-0460">Magnesium</keyword>
<keyword id="KW-0479">Metal-binding</keyword>
<keyword id="KW-0548">Nucleotidyltransferase</keyword>
<keyword id="KW-1185">Reference proteome</keyword>
<keyword id="KW-0694">RNA-binding</keyword>
<keyword id="KW-0808">Transferase</keyword>
<evidence type="ECO:0000255" key="1">
    <source>
        <dbReference type="HAMAP-Rule" id="MF_01595"/>
    </source>
</evidence>
<comment type="function">
    <text evidence="1">Involved in mRNA degradation. Catalyzes the phosphorolysis of single-stranded polyribonucleotides processively in the 3'- to 5'-direction.</text>
</comment>
<comment type="catalytic activity">
    <reaction evidence="1">
        <text>RNA(n+1) + phosphate = RNA(n) + a ribonucleoside 5'-diphosphate</text>
        <dbReference type="Rhea" id="RHEA:22096"/>
        <dbReference type="Rhea" id="RHEA-COMP:14527"/>
        <dbReference type="Rhea" id="RHEA-COMP:17342"/>
        <dbReference type="ChEBI" id="CHEBI:43474"/>
        <dbReference type="ChEBI" id="CHEBI:57930"/>
        <dbReference type="ChEBI" id="CHEBI:140395"/>
        <dbReference type="EC" id="2.7.7.8"/>
    </reaction>
</comment>
<comment type="cofactor">
    <cofactor evidence="1">
        <name>Mg(2+)</name>
        <dbReference type="ChEBI" id="CHEBI:18420"/>
    </cofactor>
</comment>
<comment type="subcellular location">
    <subcellularLocation>
        <location evidence="1">Cytoplasm</location>
    </subcellularLocation>
</comment>
<comment type="similarity">
    <text evidence="1">Belongs to the polyribonucleotide nucleotidyltransferase family.</text>
</comment>
<protein>
    <recommendedName>
        <fullName evidence="1">Polyribonucleotide nucleotidyltransferase</fullName>
        <ecNumber evidence="1">2.7.7.8</ecNumber>
    </recommendedName>
    <alternativeName>
        <fullName evidence="1">Polynucleotide phosphorylase</fullName>
        <shortName evidence="1">PNPase</shortName>
    </alternativeName>
</protein>